<comment type="function">
    <text evidence="1">Present in the aqueous fluid surrounding olfactory sensory dendrites and are thought to aid in the capture and transport of hydrophobic odorants into and through this fluid.</text>
</comment>
<comment type="subcellular location">
    <subcellularLocation>
        <location evidence="1">Secreted</location>
    </subcellularLocation>
</comment>
<comment type="tissue specificity">
    <text evidence="3 4">Expressed in ventral pits of larvae. In adults, it is not specifically expressed in chemosensory organs. Also expressed in stalk cells at the proximal tip of the wing disk.</text>
</comment>
<comment type="similarity">
    <text evidence="6">Belongs to the PBP/GOBP family.</text>
</comment>
<proteinExistence type="evidence at transcript level"/>
<reference key="1">
    <citation type="journal article" date="2007" name="Genetics">
        <title>Association of polymorphisms in odorant-binding protein genes with variation in olfactory response to benzaldehyde in Drosophila.</title>
        <authorList>
            <person name="Wang P."/>
            <person name="Lyman R.F."/>
            <person name="Shabalina S.A."/>
            <person name="Mackay T.F.C."/>
            <person name="Anholt R.R.H."/>
        </authorList>
    </citation>
    <scope>NUCLEOTIDE SEQUENCE [GENOMIC DNA]</scope>
    <scope>VARIANTS ALA-15; MET-88 AND SER-120</scope>
    <source>
        <strain>301A</strain>
        <strain>303A</strain>
        <strain>304A</strain>
        <strain>306A</strain>
        <strain>307A</strain>
        <strain>313A</strain>
        <strain>315A</strain>
        <strain>318A</strain>
        <strain>319A</strain>
        <strain>322A</strain>
        <strain>324A</strain>
        <strain>332A</strain>
        <strain>335A</strain>
        <strain>336A</strain>
        <strain>350A</strain>
        <strain>357A</strain>
        <strain>358A</strain>
        <strain>359A</strain>
        <strain>361A</strain>
        <strain>362A</strain>
        <strain>375A</strain>
        <strain>390A</strain>
        <strain>397A</strain>
        <strain>399A</strain>
        <strain>705A</strain>
        <strain>707A</strain>
        <strain>732A</strain>
        <strain>734A</strain>
        <strain>735A</strain>
        <strain>736A</strain>
        <strain>737A</strain>
        <strain>740A</strain>
        <strain>765A</strain>
        <strain>773A</strain>
        <strain>774A</strain>
        <strain>786A</strain>
        <strain>787A</strain>
        <strain>797A</strain>
        <strain>799A</strain>
        <strain>808A</strain>
        <strain>813A</strain>
        <strain>820A</strain>
        <strain>822A</strain>
        <strain>832A</strain>
        <strain>838A</strain>
        <strain>852A</strain>
        <strain>859A</strain>
        <strain>868A</strain>
        <strain>907A</strain>
        <strain>911A</strain>
    </source>
</reference>
<reference key="2">
    <citation type="journal article" date="2000" name="Science">
        <title>The genome sequence of Drosophila melanogaster.</title>
        <authorList>
            <person name="Adams M.D."/>
            <person name="Celniker S.E."/>
            <person name="Holt R.A."/>
            <person name="Evans C.A."/>
            <person name="Gocayne J.D."/>
            <person name="Amanatides P.G."/>
            <person name="Scherer S.E."/>
            <person name="Li P.W."/>
            <person name="Hoskins R.A."/>
            <person name="Galle R.F."/>
            <person name="George R.A."/>
            <person name="Lewis S.E."/>
            <person name="Richards S."/>
            <person name="Ashburner M."/>
            <person name="Henderson S.N."/>
            <person name="Sutton G.G."/>
            <person name="Wortman J.R."/>
            <person name="Yandell M.D."/>
            <person name="Zhang Q."/>
            <person name="Chen L.X."/>
            <person name="Brandon R.C."/>
            <person name="Rogers Y.-H.C."/>
            <person name="Blazej R.G."/>
            <person name="Champe M."/>
            <person name="Pfeiffer B.D."/>
            <person name="Wan K.H."/>
            <person name="Doyle C."/>
            <person name="Baxter E.G."/>
            <person name="Helt G."/>
            <person name="Nelson C.R."/>
            <person name="Miklos G.L.G."/>
            <person name="Abril J.F."/>
            <person name="Agbayani A."/>
            <person name="An H.-J."/>
            <person name="Andrews-Pfannkoch C."/>
            <person name="Baldwin D."/>
            <person name="Ballew R.M."/>
            <person name="Basu A."/>
            <person name="Baxendale J."/>
            <person name="Bayraktaroglu L."/>
            <person name="Beasley E.M."/>
            <person name="Beeson K.Y."/>
            <person name="Benos P.V."/>
            <person name="Berman B.P."/>
            <person name="Bhandari D."/>
            <person name="Bolshakov S."/>
            <person name="Borkova D."/>
            <person name="Botchan M.R."/>
            <person name="Bouck J."/>
            <person name="Brokstein P."/>
            <person name="Brottier P."/>
            <person name="Burtis K.C."/>
            <person name="Busam D.A."/>
            <person name="Butler H."/>
            <person name="Cadieu E."/>
            <person name="Center A."/>
            <person name="Chandra I."/>
            <person name="Cherry J.M."/>
            <person name="Cawley S."/>
            <person name="Dahlke C."/>
            <person name="Davenport L.B."/>
            <person name="Davies P."/>
            <person name="de Pablos B."/>
            <person name="Delcher A."/>
            <person name="Deng Z."/>
            <person name="Mays A.D."/>
            <person name="Dew I."/>
            <person name="Dietz S.M."/>
            <person name="Dodson K."/>
            <person name="Doup L.E."/>
            <person name="Downes M."/>
            <person name="Dugan-Rocha S."/>
            <person name="Dunkov B.C."/>
            <person name="Dunn P."/>
            <person name="Durbin K.J."/>
            <person name="Evangelista C.C."/>
            <person name="Ferraz C."/>
            <person name="Ferriera S."/>
            <person name="Fleischmann W."/>
            <person name="Fosler C."/>
            <person name="Gabrielian A.E."/>
            <person name="Garg N.S."/>
            <person name="Gelbart W.M."/>
            <person name="Glasser K."/>
            <person name="Glodek A."/>
            <person name="Gong F."/>
            <person name="Gorrell J.H."/>
            <person name="Gu Z."/>
            <person name="Guan P."/>
            <person name="Harris M."/>
            <person name="Harris N.L."/>
            <person name="Harvey D.A."/>
            <person name="Heiman T.J."/>
            <person name="Hernandez J.R."/>
            <person name="Houck J."/>
            <person name="Hostin D."/>
            <person name="Houston K.A."/>
            <person name="Howland T.J."/>
            <person name="Wei M.-H."/>
            <person name="Ibegwam C."/>
            <person name="Jalali M."/>
            <person name="Kalush F."/>
            <person name="Karpen G.H."/>
            <person name="Ke Z."/>
            <person name="Kennison J.A."/>
            <person name="Ketchum K.A."/>
            <person name="Kimmel B.E."/>
            <person name="Kodira C.D."/>
            <person name="Kraft C.L."/>
            <person name="Kravitz S."/>
            <person name="Kulp D."/>
            <person name="Lai Z."/>
            <person name="Lasko P."/>
            <person name="Lei Y."/>
            <person name="Levitsky A.A."/>
            <person name="Li J.H."/>
            <person name="Li Z."/>
            <person name="Liang Y."/>
            <person name="Lin X."/>
            <person name="Liu X."/>
            <person name="Mattei B."/>
            <person name="McIntosh T.C."/>
            <person name="McLeod M.P."/>
            <person name="McPherson D."/>
            <person name="Merkulov G."/>
            <person name="Milshina N.V."/>
            <person name="Mobarry C."/>
            <person name="Morris J."/>
            <person name="Moshrefi A."/>
            <person name="Mount S.M."/>
            <person name="Moy M."/>
            <person name="Murphy B."/>
            <person name="Murphy L."/>
            <person name="Muzny D.M."/>
            <person name="Nelson D.L."/>
            <person name="Nelson D.R."/>
            <person name="Nelson K.A."/>
            <person name="Nixon K."/>
            <person name="Nusskern D.R."/>
            <person name="Pacleb J.M."/>
            <person name="Palazzolo M."/>
            <person name="Pittman G.S."/>
            <person name="Pan S."/>
            <person name="Pollard J."/>
            <person name="Puri V."/>
            <person name="Reese M.G."/>
            <person name="Reinert K."/>
            <person name="Remington K."/>
            <person name="Saunders R.D.C."/>
            <person name="Scheeler F."/>
            <person name="Shen H."/>
            <person name="Shue B.C."/>
            <person name="Siden-Kiamos I."/>
            <person name="Simpson M."/>
            <person name="Skupski M.P."/>
            <person name="Smith T.J."/>
            <person name="Spier E."/>
            <person name="Spradling A.C."/>
            <person name="Stapleton M."/>
            <person name="Strong R."/>
            <person name="Sun E."/>
            <person name="Svirskas R."/>
            <person name="Tector C."/>
            <person name="Turner R."/>
            <person name="Venter E."/>
            <person name="Wang A.H."/>
            <person name="Wang X."/>
            <person name="Wang Z.-Y."/>
            <person name="Wassarman D.A."/>
            <person name="Weinstock G.M."/>
            <person name="Weissenbach J."/>
            <person name="Williams S.M."/>
            <person name="Woodage T."/>
            <person name="Worley K.C."/>
            <person name="Wu D."/>
            <person name="Yang S."/>
            <person name="Yao Q.A."/>
            <person name="Ye J."/>
            <person name="Yeh R.-F."/>
            <person name="Zaveri J.S."/>
            <person name="Zhan M."/>
            <person name="Zhang G."/>
            <person name="Zhao Q."/>
            <person name="Zheng L."/>
            <person name="Zheng X.H."/>
            <person name="Zhong F.N."/>
            <person name="Zhong W."/>
            <person name="Zhou X."/>
            <person name="Zhu S.C."/>
            <person name="Zhu X."/>
            <person name="Smith H.O."/>
            <person name="Gibbs R.A."/>
            <person name="Myers E.W."/>
            <person name="Rubin G.M."/>
            <person name="Venter J.C."/>
        </authorList>
    </citation>
    <scope>NUCLEOTIDE SEQUENCE [LARGE SCALE GENOMIC DNA]</scope>
    <source>
        <strain>Berkeley</strain>
    </source>
</reference>
<reference key="3">
    <citation type="journal article" date="2002" name="Genome Biol.">
        <title>Annotation of the Drosophila melanogaster euchromatic genome: a systematic review.</title>
        <authorList>
            <person name="Misra S."/>
            <person name="Crosby M.A."/>
            <person name="Mungall C.J."/>
            <person name="Matthews B.B."/>
            <person name="Campbell K.S."/>
            <person name="Hradecky P."/>
            <person name="Huang Y."/>
            <person name="Kaminker J.S."/>
            <person name="Millburn G.H."/>
            <person name="Prochnik S.E."/>
            <person name="Smith C.D."/>
            <person name="Tupy J.L."/>
            <person name="Whitfield E.J."/>
            <person name="Bayraktaroglu L."/>
            <person name="Berman B.P."/>
            <person name="Bettencourt B.R."/>
            <person name="Celniker S.E."/>
            <person name="de Grey A.D.N.J."/>
            <person name="Drysdale R.A."/>
            <person name="Harris N.L."/>
            <person name="Richter J."/>
            <person name="Russo S."/>
            <person name="Schroeder A.J."/>
            <person name="Shu S.Q."/>
            <person name="Stapleton M."/>
            <person name="Yamada C."/>
            <person name="Ashburner M."/>
            <person name="Gelbart W.M."/>
            <person name="Rubin G.M."/>
            <person name="Lewis S.E."/>
        </authorList>
    </citation>
    <scope>GENOME REANNOTATION</scope>
    <source>
        <strain>Berkeley</strain>
    </source>
</reference>
<reference key="4">
    <citation type="journal article" date="2002" name="Genome Biol.">
        <title>A Drosophila full-length cDNA resource.</title>
        <authorList>
            <person name="Stapleton M."/>
            <person name="Carlson J.W."/>
            <person name="Brokstein P."/>
            <person name="Yu C."/>
            <person name="Champe M."/>
            <person name="George R.A."/>
            <person name="Guarin H."/>
            <person name="Kronmiller B."/>
            <person name="Pacleb J.M."/>
            <person name="Park S."/>
            <person name="Wan K.H."/>
            <person name="Rubin G.M."/>
            <person name="Celniker S.E."/>
        </authorList>
    </citation>
    <scope>NUCLEOTIDE SEQUENCE [LARGE SCALE MRNA]</scope>
    <source>
        <strain>Berkeley</strain>
        <tissue>Head</tissue>
    </source>
</reference>
<reference key="5">
    <citation type="journal article" date="2001" name="Genetics">
        <title>A large family of divergent Drosophila odorant-binding proteins expressed in gustatory and olfactory sensilla.</title>
        <authorList>
            <person name="Galindo K."/>
            <person name="Smith D.P."/>
        </authorList>
    </citation>
    <scope>IDENTIFICATION</scope>
    <scope>TISSUE SPECIFICITY</scope>
</reference>
<reference key="6">
    <citation type="journal article" date="2003" name="Development">
        <title>Discovery of genes with highly restricted expression patterns in the Drosophila wing disc using DNA oligonucleotide microarrays.</title>
        <authorList>
            <person name="Butler M.J."/>
            <person name="Jacobsen T.L."/>
            <person name="Cain D.M."/>
            <person name="Jarman M.G."/>
            <person name="Hubank M."/>
            <person name="Whittle J.R.S."/>
            <person name="Phillips R."/>
            <person name="Simcox A."/>
        </authorList>
    </citation>
    <scope>TISSUE SPECIFICITY</scope>
</reference>
<organism>
    <name type="scientific">Drosophila melanogaster</name>
    <name type="common">Fruit fly</name>
    <dbReference type="NCBI Taxonomy" id="7227"/>
    <lineage>
        <taxon>Eukaryota</taxon>
        <taxon>Metazoa</taxon>
        <taxon>Ecdysozoa</taxon>
        <taxon>Arthropoda</taxon>
        <taxon>Hexapoda</taxon>
        <taxon>Insecta</taxon>
        <taxon>Pterygota</taxon>
        <taxon>Neoptera</taxon>
        <taxon>Endopterygota</taxon>
        <taxon>Diptera</taxon>
        <taxon>Brachycera</taxon>
        <taxon>Muscomorpha</taxon>
        <taxon>Ephydroidea</taxon>
        <taxon>Drosophilidae</taxon>
        <taxon>Drosophila</taxon>
        <taxon>Sophophora</taxon>
    </lineage>
</organism>
<dbReference type="EMBL" id="EU088428">
    <property type="protein sequence ID" value="ABW77763.1"/>
    <property type="molecule type" value="Genomic_DNA"/>
</dbReference>
<dbReference type="EMBL" id="EU088429">
    <property type="protein sequence ID" value="ABW77764.1"/>
    <property type="molecule type" value="Genomic_DNA"/>
</dbReference>
<dbReference type="EMBL" id="EU088430">
    <property type="protein sequence ID" value="ABW77765.1"/>
    <property type="molecule type" value="Genomic_DNA"/>
</dbReference>
<dbReference type="EMBL" id="EU088431">
    <property type="protein sequence ID" value="ABW77766.1"/>
    <property type="molecule type" value="Genomic_DNA"/>
</dbReference>
<dbReference type="EMBL" id="EU088432">
    <property type="protein sequence ID" value="ABW77767.1"/>
    <property type="molecule type" value="Genomic_DNA"/>
</dbReference>
<dbReference type="EMBL" id="EU088433">
    <property type="protein sequence ID" value="ABW77768.1"/>
    <property type="molecule type" value="Genomic_DNA"/>
</dbReference>
<dbReference type="EMBL" id="EU088434">
    <property type="protein sequence ID" value="ABW77769.1"/>
    <property type="molecule type" value="Genomic_DNA"/>
</dbReference>
<dbReference type="EMBL" id="EU088435">
    <property type="protein sequence ID" value="ABW77770.1"/>
    <property type="molecule type" value="Genomic_DNA"/>
</dbReference>
<dbReference type="EMBL" id="EU088436">
    <property type="protein sequence ID" value="ABW77771.1"/>
    <property type="molecule type" value="Genomic_DNA"/>
</dbReference>
<dbReference type="EMBL" id="EU088437">
    <property type="protein sequence ID" value="ABW77772.1"/>
    <property type="molecule type" value="Genomic_DNA"/>
</dbReference>
<dbReference type="EMBL" id="EU088438">
    <property type="protein sequence ID" value="ABW77773.1"/>
    <property type="molecule type" value="Genomic_DNA"/>
</dbReference>
<dbReference type="EMBL" id="EU088439">
    <property type="protein sequence ID" value="ABW77774.1"/>
    <property type="molecule type" value="Genomic_DNA"/>
</dbReference>
<dbReference type="EMBL" id="EU088440">
    <property type="protein sequence ID" value="ABW77775.1"/>
    <property type="molecule type" value="Genomic_DNA"/>
</dbReference>
<dbReference type="EMBL" id="EU088441">
    <property type="protein sequence ID" value="ABW77776.1"/>
    <property type="molecule type" value="Genomic_DNA"/>
</dbReference>
<dbReference type="EMBL" id="EU088442">
    <property type="protein sequence ID" value="ABW77777.1"/>
    <property type="molecule type" value="Genomic_DNA"/>
</dbReference>
<dbReference type="EMBL" id="EU088443">
    <property type="protein sequence ID" value="ABW77778.1"/>
    <property type="molecule type" value="Genomic_DNA"/>
</dbReference>
<dbReference type="EMBL" id="EU088444">
    <property type="protein sequence ID" value="ABW77779.1"/>
    <property type="molecule type" value="Genomic_DNA"/>
</dbReference>
<dbReference type="EMBL" id="EU088445">
    <property type="protein sequence ID" value="ABW77780.1"/>
    <property type="molecule type" value="Genomic_DNA"/>
</dbReference>
<dbReference type="EMBL" id="EU088446">
    <property type="protein sequence ID" value="ABW77781.1"/>
    <property type="molecule type" value="Genomic_DNA"/>
</dbReference>
<dbReference type="EMBL" id="EU088447">
    <property type="protein sequence ID" value="ABW77782.1"/>
    <property type="molecule type" value="Genomic_DNA"/>
</dbReference>
<dbReference type="EMBL" id="EU088448">
    <property type="protein sequence ID" value="ABW77783.1"/>
    <property type="molecule type" value="Genomic_DNA"/>
</dbReference>
<dbReference type="EMBL" id="EU088449">
    <property type="protein sequence ID" value="ABW77784.1"/>
    <property type="molecule type" value="Genomic_DNA"/>
</dbReference>
<dbReference type="EMBL" id="EU088450">
    <property type="protein sequence ID" value="ABW77785.1"/>
    <property type="molecule type" value="Genomic_DNA"/>
</dbReference>
<dbReference type="EMBL" id="EU088451">
    <property type="protein sequence ID" value="ABW77786.1"/>
    <property type="molecule type" value="Genomic_DNA"/>
</dbReference>
<dbReference type="EMBL" id="EU088452">
    <property type="protein sequence ID" value="ABW77787.1"/>
    <property type="molecule type" value="Genomic_DNA"/>
</dbReference>
<dbReference type="EMBL" id="EU088453">
    <property type="protein sequence ID" value="ABW77788.1"/>
    <property type="molecule type" value="Genomic_DNA"/>
</dbReference>
<dbReference type="EMBL" id="EU088454">
    <property type="protein sequence ID" value="ABW77789.1"/>
    <property type="molecule type" value="Genomic_DNA"/>
</dbReference>
<dbReference type="EMBL" id="EU088455">
    <property type="protein sequence ID" value="ABW77790.1"/>
    <property type="molecule type" value="Genomic_DNA"/>
</dbReference>
<dbReference type="EMBL" id="EU088456">
    <property type="protein sequence ID" value="ABW77791.1"/>
    <property type="molecule type" value="Genomic_DNA"/>
</dbReference>
<dbReference type="EMBL" id="EU088457">
    <property type="protein sequence ID" value="ABW77792.1"/>
    <property type="molecule type" value="Genomic_DNA"/>
</dbReference>
<dbReference type="EMBL" id="EU088458">
    <property type="protein sequence ID" value="ABW77793.1"/>
    <property type="molecule type" value="Genomic_DNA"/>
</dbReference>
<dbReference type="EMBL" id="EU088459">
    <property type="protein sequence ID" value="ABW77794.1"/>
    <property type="molecule type" value="Genomic_DNA"/>
</dbReference>
<dbReference type="EMBL" id="EU088460">
    <property type="protein sequence ID" value="ABW77795.1"/>
    <property type="molecule type" value="Genomic_DNA"/>
</dbReference>
<dbReference type="EMBL" id="EU088461">
    <property type="protein sequence ID" value="ABW77796.1"/>
    <property type="molecule type" value="Genomic_DNA"/>
</dbReference>
<dbReference type="EMBL" id="EU088462">
    <property type="protein sequence ID" value="ABW77797.1"/>
    <property type="molecule type" value="Genomic_DNA"/>
</dbReference>
<dbReference type="EMBL" id="EU088463">
    <property type="protein sequence ID" value="ABW77798.1"/>
    <property type="molecule type" value="Genomic_DNA"/>
</dbReference>
<dbReference type="EMBL" id="EU088464">
    <property type="protein sequence ID" value="ABW77799.1"/>
    <property type="molecule type" value="Genomic_DNA"/>
</dbReference>
<dbReference type="EMBL" id="EU088465">
    <property type="protein sequence ID" value="ABW77800.1"/>
    <property type="molecule type" value="Genomic_DNA"/>
</dbReference>
<dbReference type="EMBL" id="EU088466">
    <property type="protein sequence ID" value="ABW77801.1"/>
    <property type="molecule type" value="Genomic_DNA"/>
</dbReference>
<dbReference type="EMBL" id="EU088467">
    <property type="protein sequence ID" value="ABW77802.1"/>
    <property type="molecule type" value="Genomic_DNA"/>
</dbReference>
<dbReference type="EMBL" id="EU088468">
    <property type="protein sequence ID" value="ABW77803.1"/>
    <property type="molecule type" value="Genomic_DNA"/>
</dbReference>
<dbReference type="EMBL" id="EU088469">
    <property type="protein sequence ID" value="ABW77804.1"/>
    <property type="molecule type" value="Genomic_DNA"/>
</dbReference>
<dbReference type="EMBL" id="EU088470">
    <property type="protein sequence ID" value="ABW77805.1"/>
    <property type="molecule type" value="Genomic_DNA"/>
</dbReference>
<dbReference type="EMBL" id="EU088471">
    <property type="protein sequence ID" value="ABW77806.1"/>
    <property type="molecule type" value="Genomic_DNA"/>
</dbReference>
<dbReference type="EMBL" id="EU088472">
    <property type="protein sequence ID" value="ABW77807.1"/>
    <property type="molecule type" value="Genomic_DNA"/>
</dbReference>
<dbReference type="EMBL" id="EU088473">
    <property type="protein sequence ID" value="ABW77808.1"/>
    <property type="molecule type" value="Genomic_DNA"/>
</dbReference>
<dbReference type="EMBL" id="EU088474">
    <property type="protein sequence ID" value="ABW77809.1"/>
    <property type="molecule type" value="Genomic_DNA"/>
</dbReference>
<dbReference type="EMBL" id="EU088475">
    <property type="protein sequence ID" value="ABW77810.1"/>
    <property type="molecule type" value="Genomic_DNA"/>
</dbReference>
<dbReference type="EMBL" id="EU088476">
    <property type="protein sequence ID" value="ABW77811.1"/>
    <property type="molecule type" value="Genomic_DNA"/>
</dbReference>
<dbReference type="EMBL" id="EU088477">
    <property type="protein sequence ID" value="ABW77812.1"/>
    <property type="molecule type" value="Genomic_DNA"/>
</dbReference>
<dbReference type="EMBL" id="AE013599">
    <property type="protein sequence ID" value="AAF57522.1"/>
    <property type="molecule type" value="Genomic_DNA"/>
</dbReference>
<dbReference type="EMBL" id="AY071723">
    <property type="protein sequence ID" value="AAL49345.1"/>
    <property type="molecule type" value="mRNA"/>
</dbReference>
<dbReference type="EMBL" id="AY113487">
    <property type="protein sequence ID" value="AAM29492.1"/>
    <property type="molecule type" value="mRNA"/>
</dbReference>
<dbReference type="RefSeq" id="NP_611442.1">
    <property type="nucleotide sequence ID" value="NM_137598.3"/>
</dbReference>
<dbReference type="SMR" id="Q9V8Y2"/>
<dbReference type="BioGRID" id="62920">
    <property type="interactions" value="5"/>
</dbReference>
<dbReference type="FunCoup" id="Q9V8Y2">
    <property type="interactions" value="21"/>
</dbReference>
<dbReference type="IntAct" id="Q9V8Y2">
    <property type="interactions" value="5"/>
</dbReference>
<dbReference type="STRING" id="7227.FBpp0085672"/>
<dbReference type="GlyCosmos" id="Q9V8Y2">
    <property type="glycosylation" value="1 site, No reported glycans"/>
</dbReference>
<dbReference type="GlyGen" id="Q9V8Y2">
    <property type="glycosylation" value="1 site"/>
</dbReference>
<dbReference type="PaxDb" id="7227-FBpp0085672"/>
<dbReference type="DNASU" id="37264"/>
<dbReference type="EnsemblMetazoa" id="FBtr0086476">
    <property type="protein sequence ID" value="FBpp0085672"/>
    <property type="gene ID" value="FBgn0034468"/>
</dbReference>
<dbReference type="GeneID" id="37264"/>
<dbReference type="KEGG" id="dme:Dmel_CG11797"/>
<dbReference type="AGR" id="FB:FBgn0034468"/>
<dbReference type="CTD" id="37264"/>
<dbReference type="FlyBase" id="FBgn0034468">
    <property type="gene designation" value="Obp56a"/>
</dbReference>
<dbReference type="VEuPathDB" id="VectorBase:FBgn0034468"/>
<dbReference type="eggNOG" id="ENOG502TCE1">
    <property type="taxonomic scope" value="Eukaryota"/>
</dbReference>
<dbReference type="HOGENOM" id="CLU_107288_3_2_1"/>
<dbReference type="InParanoid" id="Q9V8Y2"/>
<dbReference type="OMA" id="NIKCFAN"/>
<dbReference type="OrthoDB" id="7665616at2759"/>
<dbReference type="PhylomeDB" id="Q9V8Y2"/>
<dbReference type="BioGRID-ORCS" id="37264">
    <property type="hits" value="0 hits in 1 CRISPR screen"/>
</dbReference>
<dbReference type="ChiTaRS" id="Obp56a">
    <property type="organism name" value="fly"/>
</dbReference>
<dbReference type="GenomeRNAi" id="37264"/>
<dbReference type="PRO" id="PR:Q9V8Y2"/>
<dbReference type="Proteomes" id="UP000000803">
    <property type="component" value="Chromosome 2R"/>
</dbReference>
<dbReference type="Bgee" id="FBgn0034468">
    <property type="expression patterns" value="Expressed in embryonic head epidermis (Drosophila) and 69 other cell types or tissues"/>
</dbReference>
<dbReference type="ExpressionAtlas" id="Q9V8Y2">
    <property type="expression patterns" value="baseline and differential"/>
</dbReference>
<dbReference type="GO" id="GO:0005576">
    <property type="term" value="C:extracellular region"/>
    <property type="evidence" value="ECO:0000250"/>
    <property type="project" value="UniProtKB"/>
</dbReference>
<dbReference type="GO" id="GO:0005615">
    <property type="term" value="C:extracellular space"/>
    <property type="evidence" value="ECO:0000318"/>
    <property type="project" value="GO_Central"/>
</dbReference>
<dbReference type="GO" id="GO:0005549">
    <property type="term" value="F:odorant binding"/>
    <property type="evidence" value="ECO:0000250"/>
    <property type="project" value="FlyBase"/>
</dbReference>
<dbReference type="GO" id="GO:0042048">
    <property type="term" value="P:olfactory behavior"/>
    <property type="evidence" value="ECO:0000250"/>
    <property type="project" value="UniProtKB"/>
</dbReference>
<dbReference type="GO" id="GO:0019236">
    <property type="term" value="P:response to pheromone"/>
    <property type="evidence" value="ECO:0000250"/>
    <property type="project" value="UniProtKB"/>
</dbReference>
<dbReference type="GO" id="GO:0007606">
    <property type="term" value="P:sensory perception of chemical stimulus"/>
    <property type="evidence" value="ECO:0000250"/>
    <property type="project" value="FlyBase"/>
</dbReference>
<dbReference type="GO" id="GO:0007608">
    <property type="term" value="P:sensory perception of smell"/>
    <property type="evidence" value="ECO:0000270"/>
    <property type="project" value="UniProtKB"/>
</dbReference>
<dbReference type="CDD" id="cd23992">
    <property type="entry name" value="PBP_GOBP"/>
    <property type="match status" value="1"/>
</dbReference>
<dbReference type="FunFam" id="1.10.238.20:FF:000001">
    <property type="entry name" value="General odorant-binding protein lush"/>
    <property type="match status" value="1"/>
</dbReference>
<dbReference type="Gene3D" id="1.10.238.20">
    <property type="entry name" value="Pheromone/general odorant binding protein domain"/>
    <property type="match status" value="1"/>
</dbReference>
<dbReference type="InterPro" id="IPR006170">
    <property type="entry name" value="PBP/GOBP"/>
</dbReference>
<dbReference type="InterPro" id="IPR036728">
    <property type="entry name" value="PBP_GOBP_sf"/>
</dbReference>
<dbReference type="PANTHER" id="PTHR11857:SF43">
    <property type="entry name" value="GEO07291P1-RELATED"/>
    <property type="match status" value="1"/>
</dbReference>
<dbReference type="PANTHER" id="PTHR11857">
    <property type="entry name" value="ODORANT BINDING PROTEIN-RELATED"/>
    <property type="match status" value="1"/>
</dbReference>
<dbReference type="Pfam" id="PF01395">
    <property type="entry name" value="PBP_GOBP"/>
    <property type="match status" value="1"/>
</dbReference>
<dbReference type="SMART" id="SM00708">
    <property type="entry name" value="PhBP"/>
    <property type="match status" value="1"/>
</dbReference>
<dbReference type="SUPFAM" id="SSF47565">
    <property type="entry name" value="Insect pheromone/odorant-binding proteins"/>
    <property type="match status" value="1"/>
</dbReference>
<gene>
    <name type="primary">Obp56a</name>
    <name type="ORF">CG11797</name>
</gene>
<keyword id="KW-1015">Disulfide bond</keyword>
<keyword id="KW-0325">Glycoprotein</keyword>
<keyword id="KW-0552">Olfaction</keyword>
<keyword id="KW-1185">Reference proteome</keyword>
<keyword id="KW-0964">Secreted</keyword>
<keyword id="KW-0716">Sensory transduction</keyword>
<keyword id="KW-0732">Signal</keyword>
<keyword id="KW-0813">Transport</keyword>
<evidence type="ECO:0000250" key="1"/>
<evidence type="ECO:0000255" key="2"/>
<evidence type="ECO:0000269" key="3">
    <source>
    </source>
</evidence>
<evidence type="ECO:0000269" key="4">
    <source>
    </source>
</evidence>
<evidence type="ECO:0000269" key="5">
    <source>
    </source>
</evidence>
<evidence type="ECO:0000305" key="6"/>
<name>OB56A_DROME</name>
<feature type="signal peptide" evidence="2">
    <location>
        <begin position="1"/>
        <end position="19"/>
    </location>
</feature>
<feature type="chain" id="PRO_0000012569" description="General odorant-binding protein 56a">
    <location>
        <begin position="20"/>
        <end position="139"/>
    </location>
</feature>
<feature type="glycosylation site" description="N-linked (GlcNAc...) asparagine" evidence="2">
    <location>
        <position position="23"/>
    </location>
</feature>
<feature type="disulfide bond" evidence="1">
    <location>
        <begin position="39"/>
        <end position="71"/>
    </location>
</feature>
<feature type="disulfide bond" evidence="1">
    <location>
        <begin position="67"/>
        <end position="118"/>
    </location>
</feature>
<feature type="disulfide bond" evidence="1">
    <location>
        <begin position="109"/>
        <end position="127"/>
    </location>
</feature>
<feature type="sequence variant" description="In strain: 304A, 319A, 375A, 773A, 774A, 813A, 852A and 859A." evidence="5">
    <original>T</original>
    <variation>A</variation>
    <location>
        <position position="15"/>
    </location>
</feature>
<feature type="sequence variant" description="In strain: 301A, 306A, 313A, 315A, 318A, 322A, 324A, 332A, 357A, 390A, 399A, 732A, 735A, 736A, 737A, 797A, 799A, 808A, 820A, 822A, 838A and 868A." evidence="5">
    <original>V</original>
    <variation>M</variation>
    <location>
        <position position="88"/>
    </location>
</feature>
<feature type="sequence variant" description="In strain: 907A." evidence="5">
    <original>T</original>
    <variation>S</variation>
    <location>
        <position position="120"/>
    </location>
</feature>
<accession>Q9V8Y2</accession>
<accession>A9QH77</accession>
<accession>A9QH80</accession>
<accession>A9QH86</accession>
<accession>A9QH94</accession>
<accession>A9QHB8</accession>
<sequence>MNSYFVIALSALFVTLAVGSSLNLSDEQKDLAKQHREQCAEEVKLTEEEKAKVNAKDFNNPTENIKCFANCFFEKVGTLKDGELQESVVLEKLGALIGEEKTKAALEKCRTIKGENKCDTASKLYDCFESFKPAPEAKA</sequence>
<protein>
    <recommendedName>
        <fullName>General odorant-binding protein 56a</fullName>
    </recommendedName>
</protein>